<proteinExistence type="inferred from homology"/>
<reference key="1">
    <citation type="journal article" date="2002" name="Nature">
        <title>The genome sequence of Schizosaccharomyces pombe.</title>
        <authorList>
            <person name="Wood V."/>
            <person name="Gwilliam R."/>
            <person name="Rajandream M.A."/>
            <person name="Lyne M.H."/>
            <person name="Lyne R."/>
            <person name="Stewart A."/>
            <person name="Sgouros J.G."/>
            <person name="Peat N."/>
            <person name="Hayles J."/>
            <person name="Baker S.G."/>
            <person name="Basham D."/>
            <person name="Bowman S."/>
            <person name="Brooks K."/>
            <person name="Brown D."/>
            <person name="Brown S."/>
            <person name="Chillingworth T."/>
            <person name="Churcher C.M."/>
            <person name="Collins M."/>
            <person name="Connor R."/>
            <person name="Cronin A."/>
            <person name="Davis P."/>
            <person name="Feltwell T."/>
            <person name="Fraser A."/>
            <person name="Gentles S."/>
            <person name="Goble A."/>
            <person name="Hamlin N."/>
            <person name="Harris D.E."/>
            <person name="Hidalgo J."/>
            <person name="Hodgson G."/>
            <person name="Holroyd S."/>
            <person name="Hornsby T."/>
            <person name="Howarth S."/>
            <person name="Huckle E.J."/>
            <person name="Hunt S."/>
            <person name="Jagels K."/>
            <person name="James K.D."/>
            <person name="Jones L."/>
            <person name="Jones M."/>
            <person name="Leather S."/>
            <person name="McDonald S."/>
            <person name="McLean J."/>
            <person name="Mooney P."/>
            <person name="Moule S."/>
            <person name="Mungall K.L."/>
            <person name="Murphy L.D."/>
            <person name="Niblett D."/>
            <person name="Odell C."/>
            <person name="Oliver K."/>
            <person name="O'Neil S."/>
            <person name="Pearson D."/>
            <person name="Quail M.A."/>
            <person name="Rabbinowitsch E."/>
            <person name="Rutherford K.M."/>
            <person name="Rutter S."/>
            <person name="Saunders D."/>
            <person name="Seeger K."/>
            <person name="Sharp S."/>
            <person name="Skelton J."/>
            <person name="Simmonds M.N."/>
            <person name="Squares R."/>
            <person name="Squares S."/>
            <person name="Stevens K."/>
            <person name="Taylor K."/>
            <person name="Taylor R.G."/>
            <person name="Tivey A."/>
            <person name="Walsh S.V."/>
            <person name="Warren T."/>
            <person name="Whitehead S."/>
            <person name="Woodward J.R."/>
            <person name="Volckaert G."/>
            <person name="Aert R."/>
            <person name="Robben J."/>
            <person name="Grymonprez B."/>
            <person name="Weltjens I."/>
            <person name="Vanstreels E."/>
            <person name="Rieger M."/>
            <person name="Schaefer M."/>
            <person name="Mueller-Auer S."/>
            <person name="Gabel C."/>
            <person name="Fuchs M."/>
            <person name="Duesterhoeft A."/>
            <person name="Fritzc C."/>
            <person name="Holzer E."/>
            <person name="Moestl D."/>
            <person name="Hilbert H."/>
            <person name="Borzym K."/>
            <person name="Langer I."/>
            <person name="Beck A."/>
            <person name="Lehrach H."/>
            <person name="Reinhardt R."/>
            <person name="Pohl T.M."/>
            <person name="Eger P."/>
            <person name="Zimmermann W."/>
            <person name="Wedler H."/>
            <person name="Wambutt R."/>
            <person name="Purnelle B."/>
            <person name="Goffeau A."/>
            <person name="Cadieu E."/>
            <person name="Dreano S."/>
            <person name="Gloux S."/>
            <person name="Lelaure V."/>
            <person name="Mottier S."/>
            <person name="Galibert F."/>
            <person name="Aves S.J."/>
            <person name="Xiang Z."/>
            <person name="Hunt C."/>
            <person name="Moore K."/>
            <person name="Hurst S.M."/>
            <person name="Lucas M."/>
            <person name="Rochet M."/>
            <person name="Gaillardin C."/>
            <person name="Tallada V.A."/>
            <person name="Garzon A."/>
            <person name="Thode G."/>
            <person name="Daga R.R."/>
            <person name="Cruzado L."/>
            <person name="Jimenez J."/>
            <person name="Sanchez M."/>
            <person name="del Rey F."/>
            <person name="Benito J."/>
            <person name="Dominguez A."/>
            <person name="Revuelta J.L."/>
            <person name="Moreno S."/>
            <person name="Armstrong J."/>
            <person name="Forsburg S.L."/>
            <person name="Cerutti L."/>
            <person name="Lowe T."/>
            <person name="McCombie W.R."/>
            <person name="Paulsen I."/>
            <person name="Potashkin J."/>
            <person name="Shpakovski G.V."/>
            <person name="Ussery D."/>
            <person name="Barrell B.G."/>
            <person name="Nurse P."/>
        </authorList>
    </citation>
    <scope>NUCLEOTIDE SEQUENCE [LARGE SCALE GENOMIC DNA]</scope>
    <source>
        <strain>972 / ATCC 24843</strain>
    </source>
</reference>
<reference key="2">
    <citation type="journal article" date="2011" name="Science">
        <title>Comparative functional genomics of the fission yeasts.</title>
        <authorList>
            <person name="Rhind N."/>
            <person name="Chen Z."/>
            <person name="Yassour M."/>
            <person name="Thompson D.A."/>
            <person name="Haas B.J."/>
            <person name="Habib N."/>
            <person name="Wapinski I."/>
            <person name="Roy S."/>
            <person name="Lin M.F."/>
            <person name="Heiman D.I."/>
            <person name="Young S.K."/>
            <person name="Furuya K."/>
            <person name="Guo Y."/>
            <person name="Pidoux A."/>
            <person name="Chen H.M."/>
            <person name="Robbertse B."/>
            <person name="Goldberg J.M."/>
            <person name="Aoki K."/>
            <person name="Bayne E.H."/>
            <person name="Berlin A.M."/>
            <person name="Desjardins C.A."/>
            <person name="Dobbs E."/>
            <person name="Dukaj L."/>
            <person name="Fan L."/>
            <person name="FitzGerald M.G."/>
            <person name="French C."/>
            <person name="Gujja S."/>
            <person name="Hansen K."/>
            <person name="Keifenheim D."/>
            <person name="Levin J.Z."/>
            <person name="Mosher R.A."/>
            <person name="Mueller C.A."/>
            <person name="Pfiffner J."/>
            <person name="Priest M."/>
            <person name="Russ C."/>
            <person name="Smialowska A."/>
            <person name="Swoboda P."/>
            <person name="Sykes S.M."/>
            <person name="Vaughn M."/>
            <person name="Vengrova S."/>
            <person name="Yoder R."/>
            <person name="Zeng Q."/>
            <person name="Allshire R."/>
            <person name="Baulcombe D."/>
            <person name="Birren B.W."/>
            <person name="Brown W."/>
            <person name="Ekwall K."/>
            <person name="Kellis M."/>
            <person name="Leatherwood J."/>
            <person name="Levin H."/>
            <person name="Margalit H."/>
            <person name="Martienssen R."/>
            <person name="Nieduszynski C.A."/>
            <person name="Spatafora J.W."/>
            <person name="Friedman N."/>
            <person name="Dalgaard J.Z."/>
            <person name="Baumann P."/>
            <person name="Niki H."/>
            <person name="Regev A."/>
            <person name="Nusbaum C."/>
        </authorList>
    </citation>
    <scope>REVISION OF GENE MODEL</scope>
</reference>
<reference key="3">
    <citation type="journal article" date="2006" name="Nat. Biotechnol.">
        <title>ORFeome cloning and global analysis of protein localization in the fission yeast Schizosaccharomyces pombe.</title>
        <authorList>
            <person name="Matsuyama A."/>
            <person name="Arai R."/>
            <person name="Yashiroda Y."/>
            <person name="Shirai A."/>
            <person name="Kamata A."/>
            <person name="Sekido S."/>
            <person name="Kobayashi Y."/>
            <person name="Hashimoto A."/>
            <person name="Hamamoto M."/>
            <person name="Hiraoka Y."/>
            <person name="Horinouchi S."/>
            <person name="Yoshida M."/>
        </authorList>
    </citation>
    <scope>SUBCELLULAR LOCATION [LARGE SCALE ANALYSIS]</scope>
</reference>
<comment type="subcellular location">
    <subcellularLocation>
        <location evidence="3">Cytoplasm</location>
    </subcellularLocation>
    <subcellularLocation>
        <location evidence="1 3">Nucleus</location>
    </subcellularLocation>
</comment>
<dbReference type="EMBL" id="CU329672">
    <property type="protein sequence ID" value="CAA21229.2"/>
    <property type="molecule type" value="Genomic_DNA"/>
</dbReference>
<dbReference type="PIR" id="T41595">
    <property type="entry name" value="T41595"/>
</dbReference>
<dbReference type="RefSeq" id="NP_587679.2">
    <property type="nucleotide sequence ID" value="NM_001022674.2"/>
</dbReference>
<dbReference type="BioGRID" id="275669">
    <property type="interactions" value="10"/>
</dbReference>
<dbReference type="FunCoup" id="O74915">
    <property type="interactions" value="30"/>
</dbReference>
<dbReference type="STRING" id="284812.O74915"/>
<dbReference type="iPTMnet" id="O74915"/>
<dbReference type="PaxDb" id="4896-SPCC757.04.1"/>
<dbReference type="EnsemblFungi" id="SPCC757.04.1">
    <property type="protein sequence ID" value="SPCC757.04.1:pep"/>
    <property type="gene ID" value="SPCC757.04"/>
</dbReference>
<dbReference type="KEGG" id="spo:2539097"/>
<dbReference type="PomBase" id="SPCC757.04"/>
<dbReference type="VEuPathDB" id="FungiDB:SPCC757.04"/>
<dbReference type="eggNOG" id="ENOG502QTSE">
    <property type="taxonomic scope" value="Eukaryota"/>
</dbReference>
<dbReference type="HOGENOM" id="CLU_015811_1_0_1"/>
<dbReference type="InParanoid" id="O74915"/>
<dbReference type="OMA" id="PMAWYLS"/>
<dbReference type="PRO" id="PR:O74915"/>
<dbReference type="Proteomes" id="UP000002485">
    <property type="component" value="Chromosome III"/>
</dbReference>
<dbReference type="GO" id="GO:0005829">
    <property type="term" value="C:cytosol"/>
    <property type="evidence" value="ECO:0007005"/>
    <property type="project" value="PomBase"/>
</dbReference>
<dbReference type="GO" id="GO:0005634">
    <property type="term" value="C:nucleus"/>
    <property type="evidence" value="ECO:0000255"/>
    <property type="project" value="PomBase"/>
</dbReference>
<dbReference type="GO" id="GO:0000981">
    <property type="term" value="F:DNA-binding transcription factor activity, RNA polymerase II-specific"/>
    <property type="evidence" value="ECO:0000255"/>
    <property type="project" value="PomBase"/>
</dbReference>
<dbReference type="GO" id="GO:0000978">
    <property type="term" value="F:RNA polymerase II cis-regulatory region sequence-specific DNA binding"/>
    <property type="evidence" value="ECO:0000255"/>
    <property type="project" value="PomBase"/>
</dbReference>
<dbReference type="GO" id="GO:0008270">
    <property type="term" value="F:zinc ion binding"/>
    <property type="evidence" value="ECO:0000255"/>
    <property type="project" value="PomBase"/>
</dbReference>
<dbReference type="GO" id="GO:0006351">
    <property type="term" value="P:DNA-templated transcription"/>
    <property type="evidence" value="ECO:0007669"/>
    <property type="project" value="InterPro"/>
</dbReference>
<dbReference type="GO" id="GO:0006357">
    <property type="term" value="P:regulation of transcription by RNA polymerase II"/>
    <property type="evidence" value="ECO:0000255"/>
    <property type="project" value="PomBase"/>
</dbReference>
<dbReference type="CDD" id="cd12148">
    <property type="entry name" value="fungal_TF_MHR"/>
    <property type="match status" value="1"/>
</dbReference>
<dbReference type="CDD" id="cd00067">
    <property type="entry name" value="GAL4"/>
    <property type="match status" value="1"/>
</dbReference>
<dbReference type="FunFam" id="4.10.240.10:FF:000018">
    <property type="entry name" value="Casein kinase II subunit beta"/>
    <property type="match status" value="1"/>
</dbReference>
<dbReference type="Gene3D" id="4.10.240.10">
    <property type="entry name" value="Zn(2)-C6 fungal-type DNA-binding domain"/>
    <property type="match status" value="1"/>
</dbReference>
<dbReference type="InterPro" id="IPR051615">
    <property type="entry name" value="Transcr_Regulatory_Elem"/>
</dbReference>
<dbReference type="InterPro" id="IPR007219">
    <property type="entry name" value="Transcription_factor_dom_fun"/>
</dbReference>
<dbReference type="InterPro" id="IPR036864">
    <property type="entry name" value="Zn2-C6_fun-type_DNA-bd_sf"/>
</dbReference>
<dbReference type="InterPro" id="IPR001138">
    <property type="entry name" value="Zn2Cys6_DnaBD"/>
</dbReference>
<dbReference type="PANTHER" id="PTHR31313">
    <property type="entry name" value="TY1 ENHANCER ACTIVATOR"/>
    <property type="match status" value="1"/>
</dbReference>
<dbReference type="PANTHER" id="PTHR31313:SF81">
    <property type="entry name" value="TY1 ENHANCER ACTIVATOR"/>
    <property type="match status" value="1"/>
</dbReference>
<dbReference type="Pfam" id="PF04082">
    <property type="entry name" value="Fungal_trans"/>
    <property type="match status" value="1"/>
</dbReference>
<dbReference type="Pfam" id="PF00172">
    <property type="entry name" value="Zn_clus"/>
    <property type="match status" value="1"/>
</dbReference>
<dbReference type="SMART" id="SM00906">
    <property type="entry name" value="Fungal_trans"/>
    <property type="match status" value="1"/>
</dbReference>
<dbReference type="SMART" id="SM00066">
    <property type="entry name" value="GAL4"/>
    <property type="match status" value="1"/>
</dbReference>
<dbReference type="SUPFAM" id="SSF57701">
    <property type="entry name" value="Zn2/Cys6 DNA-binding domain"/>
    <property type="match status" value="1"/>
</dbReference>
<dbReference type="PROSITE" id="PS00463">
    <property type="entry name" value="ZN2_CY6_FUNGAL_1"/>
    <property type="match status" value="1"/>
</dbReference>
<dbReference type="PROSITE" id="PS50048">
    <property type="entry name" value="ZN2_CY6_FUNGAL_2"/>
    <property type="match status" value="1"/>
</dbReference>
<feature type="chain" id="PRO_0000310387" description="Uncharacterized transcriptional regulatory protein C757.04">
    <location>
        <begin position="1"/>
        <end position="636"/>
    </location>
</feature>
<feature type="DNA-binding region" description="Zn(2)-C6 fungal-type" evidence="1">
    <location>
        <begin position="10"/>
        <end position="36"/>
    </location>
</feature>
<feature type="region of interest" description="Disordered" evidence="2">
    <location>
        <begin position="556"/>
        <end position="581"/>
    </location>
</feature>
<feature type="compositionally biased region" description="Polar residues" evidence="2">
    <location>
        <begin position="556"/>
        <end position="580"/>
    </location>
</feature>
<evidence type="ECO:0000255" key="1">
    <source>
        <dbReference type="PROSITE-ProRule" id="PRU00227"/>
    </source>
</evidence>
<evidence type="ECO:0000256" key="2">
    <source>
        <dbReference type="SAM" id="MobiDB-lite"/>
    </source>
</evidence>
<evidence type="ECO:0000269" key="3">
    <source>
    </source>
</evidence>
<organism>
    <name type="scientific">Schizosaccharomyces pombe (strain 972 / ATCC 24843)</name>
    <name type="common">Fission yeast</name>
    <dbReference type="NCBI Taxonomy" id="284812"/>
    <lineage>
        <taxon>Eukaryota</taxon>
        <taxon>Fungi</taxon>
        <taxon>Dikarya</taxon>
        <taxon>Ascomycota</taxon>
        <taxon>Taphrinomycotina</taxon>
        <taxon>Schizosaccharomycetes</taxon>
        <taxon>Schizosaccharomycetales</taxon>
        <taxon>Schizosaccharomycetaceae</taxon>
        <taxon>Schizosaccharomyces</taxon>
    </lineage>
</organism>
<keyword id="KW-0963">Cytoplasm</keyword>
<keyword id="KW-0238">DNA-binding</keyword>
<keyword id="KW-0479">Metal-binding</keyword>
<keyword id="KW-0539">Nucleus</keyword>
<keyword id="KW-1185">Reference proteome</keyword>
<keyword id="KW-0804">Transcription</keyword>
<keyword id="KW-0805">Transcription regulation</keyword>
<keyword id="KW-0862">Zinc</keyword>
<gene>
    <name type="ORF">SPCC757.04</name>
</gene>
<name>YJ74_SCHPO</name>
<sequence length="636" mass="72887">MSHRIRHLSCLACRRKKVKCNRQYPCTRCLKYGEACTYDERDNRKKRHSLSYLHSLESQLARLESFIMTLKNSDPEGRDEMLKSVVFSDHLTEPNDQEVKSEGPIEYPVFLNVQDSKTVSFYGPTSAYDLSLPDITKDNKTTWNFQASYSPMVSECLKLFFRYQYSQFLFVYRESFLSDYYYNFHDGFYCTEHLIYAICAIGASMSDDENISRHSKSYYDASWQKLLEFGLDRSHLTSVQCLLCLGYYDIGMGNTSLGWLLSGLAFRMGQDLGFQLNPENWYIDNSPAISSADSDIRRRVFWGSYVADKFIGFIMGRPTMLKRSDASIPGSNQLPEFAGLEEFKLNVTDYMSLTDFSVCDAVALFVDLSDIADSILLNMFSPTSKNRATNINCVLSNLGKYNLELMNWHYKLPDTISWRTIDLKKDRIPNLCAVSLYYHLIRICLNRPFLSRKEVTANDLTPKTICTDSINEIVTVIRAHRTANGLRYSTLYIVYAAIVSCSVILLLRDMCTDSELLTLNNDMMFFIEVLKECSQTWKLAQRSIVLIENTLKGKTNSQSTSEFVSPISDTENGSSSQQVSEAKDIVEPSDVLDELQKFDLLPENDDNFQTFQAFYGGPPIILSPNLYEKKLNEKTL</sequence>
<protein>
    <recommendedName>
        <fullName>Uncharacterized transcriptional regulatory protein C757.04</fullName>
    </recommendedName>
</protein>
<accession>O74915</accession>